<protein>
    <recommendedName>
        <fullName evidence="1">tRNA modification GTPase MnmE</fullName>
        <ecNumber evidence="1">3.6.-.-</ecNumber>
    </recommendedName>
</protein>
<evidence type="ECO:0000255" key="1">
    <source>
        <dbReference type="HAMAP-Rule" id="MF_00379"/>
    </source>
</evidence>
<keyword id="KW-0963">Cytoplasm</keyword>
<keyword id="KW-0342">GTP-binding</keyword>
<keyword id="KW-0378">Hydrolase</keyword>
<keyword id="KW-0460">Magnesium</keyword>
<keyword id="KW-0479">Metal-binding</keyword>
<keyword id="KW-0547">Nucleotide-binding</keyword>
<keyword id="KW-0630">Potassium</keyword>
<keyword id="KW-1185">Reference proteome</keyword>
<keyword id="KW-0819">tRNA processing</keyword>
<name>MNME_PSELT</name>
<proteinExistence type="inferred from homology"/>
<sequence>MPDTIVAISTPIGTGAISVIRMSGSKSWQICQNVLLRKTKIEPRKAFHNYVKDSDGTILDEVMVIFYKSPNSYTGEDMIEIMCHGGIAVTQSILDTLISHGARPAEPGEFTRRAFLNGKIDLTKAEAVKQIIEASSRKTVKLVAANLAGRLSEIVHKLRETLLGTLAKIEVEFDYPDEILTDPYLIEKELNDAILQIEEILKNAQNRLILSSGIKVVIIGKPNVGKSTLLNTLVKEERAIVTDIPGTTRDLIEVPLMINGISFTLIDTAGIRHSHDEVEKIGVERAIKAADEGNLILFVLDATTPVDENDKKILSLIKEKKYIVVINKIDATDLIDREELKKILGTNTHVLTISALKKEGIQRLEEEIIKSVKDLIQQTDGYITTQRQYEYLASCRKELSDSIEAFKKKLPLDIVAQKVKEALGSIDKLLGTDYTDDLLDRIFKDFCVGK</sequence>
<feature type="chain" id="PRO_0000345926" description="tRNA modification GTPase MnmE">
    <location>
        <begin position="1"/>
        <end position="450"/>
    </location>
</feature>
<feature type="domain" description="TrmE-type G">
    <location>
        <begin position="213"/>
        <end position="373"/>
    </location>
</feature>
<feature type="binding site" evidence="1">
    <location>
        <position position="21"/>
    </location>
    <ligand>
        <name>(6S)-5-formyl-5,6,7,8-tetrahydrofolate</name>
        <dbReference type="ChEBI" id="CHEBI:57457"/>
    </ligand>
</feature>
<feature type="binding site" evidence="1">
    <location>
        <position position="80"/>
    </location>
    <ligand>
        <name>(6S)-5-formyl-5,6,7,8-tetrahydrofolate</name>
        <dbReference type="ChEBI" id="CHEBI:57457"/>
    </ligand>
</feature>
<feature type="binding site" evidence="1">
    <location>
        <position position="119"/>
    </location>
    <ligand>
        <name>(6S)-5-formyl-5,6,7,8-tetrahydrofolate</name>
        <dbReference type="ChEBI" id="CHEBI:57457"/>
    </ligand>
</feature>
<feature type="binding site" evidence="1">
    <location>
        <begin position="223"/>
        <end position="228"/>
    </location>
    <ligand>
        <name>GTP</name>
        <dbReference type="ChEBI" id="CHEBI:37565"/>
    </ligand>
</feature>
<feature type="binding site" evidence="1">
    <location>
        <position position="223"/>
    </location>
    <ligand>
        <name>K(+)</name>
        <dbReference type="ChEBI" id="CHEBI:29103"/>
    </ligand>
</feature>
<feature type="binding site" evidence="1">
    <location>
        <position position="227"/>
    </location>
    <ligand>
        <name>Mg(2+)</name>
        <dbReference type="ChEBI" id="CHEBI:18420"/>
    </ligand>
</feature>
<feature type="binding site" evidence="1">
    <location>
        <begin position="242"/>
        <end position="248"/>
    </location>
    <ligand>
        <name>GTP</name>
        <dbReference type="ChEBI" id="CHEBI:37565"/>
    </ligand>
</feature>
<feature type="binding site" evidence="1">
    <location>
        <position position="242"/>
    </location>
    <ligand>
        <name>K(+)</name>
        <dbReference type="ChEBI" id="CHEBI:29103"/>
    </ligand>
</feature>
<feature type="binding site" evidence="1">
    <location>
        <position position="244"/>
    </location>
    <ligand>
        <name>K(+)</name>
        <dbReference type="ChEBI" id="CHEBI:29103"/>
    </ligand>
</feature>
<feature type="binding site" evidence="1">
    <location>
        <position position="247"/>
    </location>
    <ligand>
        <name>K(+)</name>
        <dbReference type="ChEBI" id="CHEBI:29103"/>
    </ligand>
</feature>
<feature type="binding site" evidence="1">
    <location>
        <position position="248"/>
    </location>
    <ligand>
        <name>Mg(2+)</name>
        <dbReference type="ChEBI" id="CHEBI:18420"/>
    </ligand>
</feature>
<feature type="binding site" evidence="1">
    <location>
        <begin position="267"/>
        <end position="270"/>
    </location>
    <ligand>
        <name>GTP</name>
        <dbReference type="ChEBI" id="CHEBI:37565"/>
    </ligand>
</feature>
<feature type="binding site" evidence="1">
    <location>
        <position position="450"/>
    </location>
    <ligand>
        <name>(6S)-5-formyl-5,6,7,8-tetrahydrofolate</name>
        <dbReference type="ChEBI" id="CHEBI:57457"/>
    </ligand>
</feature>
<gene>
    <name evidence="1" type="primary">mnmE</name>
    <name evidence="1" type="synonym">trmE</name>
    <name type="ordered locus">Tlet_1410</name>
</gene>
<dbReference type="EC" id="3.6.-.-" evidence="1"/>
<dbReference type="EMBL" id="CP000812">
    <property type="protein sequence ID" value="ABV33966.1"/>
    <property type="molecule type" value="Genomic_DNA"/>
</dbReference>
<dbReference type="RefSeq" id="WP_012003442.1">
    <property type="nucleotide sequence ID" value="NZ_BSDV01000001.1"/>
</dbReference>
<dbReference type="SMR" id="A8F732"/>
<dbReference type="STRING" id="416591.Tlet_1410"/>
<dbReference type="KEGG" id="tle:Tlet_1410"/>
<dbReference type="eggNOG" id="COG0486">
    <property type="taxonomic scope" value="Bacteria"/>
</dbReference>
<dbReference type="HOGENOM" id="CLU_019624_4_1_0"/>
<dbReference type="OrthoDB" id="9805918at2"/>
<dbReference type="Proteomes" id="UP000002016">
    <property type="component" value="Chromosome"/>
</dbReference>
<dbReference type="GO" id="GO:0005829">
    <property type="term" value="C:cytosol"/>
    <property type="evidence" value="ECO:0007669"/>
    <property type="project" value="TreeGrafter"/>
</dbReference>
<dbReference type="GO" id="GO:0005525">
    <property type="term" value="F:GTP binding"/>
    <property type="evidence" value="ECO:0007669"/>
    <property type="project" value="UniProtKB-UniRule"/>
</dbReference>
<dbReference type="GO" id="GO:0003924">
    <property type="term" value="F:GTPase activity"/>
    <property type="evidence" value="ECO:0007669"/>
    <property type="project" value="UniProtKB-UniRule"/>
</dbReference>
<dbReference type="GO" id="GO:0046872">
    <property type="term" value="F:metal ion binding"/>
    <property type="evidence" value="ECO:0007669"/>
    <property type="project" value="UniProtKB-KW"/>
</dbReference>
<dbReference type="GO" id="GO:0030488">
    <property type="term" value="P:tRNA methylation"/>
    <property type="evidence" value="ECO:0007669"/>
    <property type="project" value="TreeGrafter"/>
</dbReference>
<dbReference type="GO" id="GO:0002098">
    <property type="term" value="P:tRNA wobble uridine modification"/>
    <property type="evidence" value="ECO:0007669"/>
    <property type="project" value="TreeGrafter"/>
</dbReference>
<dbReference type="CDD" id="cd04164">
    <property type="entry name" value="trmE"/>
    <property type="match status" value="1"/>
</dbReference>
<dbReference type="CDD" id="cd14858">
    <property type="entry name" value="TrmE_N"/>
    <property type="match status" value="1"/>
</dbReference>
<dbReference type="FunFam" id="3.30.1360.120:FF:000003">
    <property type="entry name" value="tRNA modification GTPase MnmE"/>
    <property type="match status" value="1"/>
</dbReference>
<dbReference type="FunFam" id="3.40.50.300:FF:000494">
    <property type="entry name" value="tRNA modification GTPase MnmE"/>
    <property type="match status" value="1"/>
</dbReference>
<dbReference type="Gene3D" id="3.40.50.300">
    <property type="entry name" value="P-loop containing nucleotide triphosphate hydrolases"/>
    <property type="match status" value="1"/>
</dbReference>
<dbReference type="Gene3D" id="3.30.1360.120">
    <property type="entry name" value="Probable tRNA modification gtpase trme, domain 1"/>
    <property type="match status" value="1"/>
</dbReference>
<dbReference type="Gene3D" id="1.20.120.430">
    <property type="entry name" value="tRNA modification GTPase MnmE domain 2"/>
    <property type="match status" value="1"/>
</dbReference>
<dbReference type="HAMAP" id="MF_00379">
    <property type="entry name" value="GTPase_MnmE"/>
    <property type="match status" value="1"/>
</dbReference>
<dbReference type="InterPro" id="IPR031168">
    <property type="entry name" value="G_TrmE"/>
</dbReference>
<dbReference type="InterPro" id="IPR006073">
    <property type="entry name" value="GTP-bd"/>
</dbReference>
<dbReference type="InterPro" id="IPR018948">
    <property type="entry name" value="GTP-bd_TrmE_N"/>
</dbReference>
<dbReference type="InterPro" id="IPR004520">
    <property type="entry name" value="GTPase_MnmE"/>
</dbReference>
<dbReference type="InterPro" id="IPR027368">
    <property type="entry name" value="MnmE_dom2"/>
</dbReference>
<dbReference type="InterPro" id="IPR025867">
    <property type="entry name" value="MnmE_helical"/>
</dbReference>
<dbReference type="InterPro" id="IPR027417">
    <property type="entry name" value="P-loop_NTPase"/>
</dbReference>
<dbReference type="InterPro" id="IPR005225">
    <property type="entry name" value="Small_GTP-bd"/>
</dbReference>
<dbReference type="InterPro" id="IPR027266">
    <property type="entry name" value="TrmE/GcvT_dom1"/>
</dbReference>
<dbReference type="NCBIfam" id="TIGR00450">
    <property type="entry name" value="mnmE_trmE_thdF"/>
    <property type="match status" value="1"/>
</dbReference>
<dbReference type="NCBIfam" id="NF003661">
    <property type="entry name" value="PRK05291.1-3"/>
    <property type="match status" value="1"/>
</dbReference>
<dbReference type="NCBIfam" id="TIGR00231">
    <property type="entry name" value="small_GTP"/>
    <property type="match status" value="1"/>
</dbReference>
<dbReference type="PANTHER" id="PTHR42714">
    <property type="entry name" value="TRNA MODIFICATION GTPASE GTPBP3"/>
    <property type="match status" value="1"/>
</dbReference>
<dbReference type="PANTHER" id="PTHR42714:SF2">
    <property type="entry name" value="TRNA MODIFICATION GTPASE GTPBP3, MITOCHONDRIAL"/>
    <property type="match status" value="1"/>
</dbReference>
<dbReference type="Pfam" id="PF01926">
    <property type="entry name" value="MMR_HSR1"/>
    <property type="match status" value="1"/>
</dbReference>
<dbReference type="Pfam" id="PF12631">
    <property type="entry name" value="MnmE_helical"/>
    <property type="match status" value="1"/>
</dbReference>
<dbReference type="Pfam" id="PF10396">
    <property type="entry name" value="TrmE_N"/>
    <property type="match status" value="1"/>
</dbReference>
<dbReference type="PRINTS" id="PR00326">
    <property type="entry name" value="GTP1OBG"/>
</dbReference>
<dbReference type="SUPFAM" id="SSF52540">
    <property type="entry name" value="P-loop containing nucleoside triphosphate hydrolases"/>
    <property type="match status" value="1"/>
</dbReference>
<dbReference type="PROSITE" id="PS51709">
    <property type="entry name" value="G_TRME"/>
    <property type="match status" value="1"/>
</dbReference>
<accession>A8F732</accession>
<organism>
    <name type="scientific">Pseudothermotoga lettingae (strain ATCC BAA-301 / DSM 14385 / NBRC 107922 / TMO)</name>
    <name type="common">Thermotoga lettingae</name>
    <dbReference type="NCBI Taxonomy" id="416591"/>
    <lineage>
        <taxon>Bacteria</taxon>
        <taxon>Thermotogati</taxon>
        <taxon>Thermotogota</taxon>
        <taxon>Thermotogae</taxon>
        <taxon>Thermotogales</taxon>
        <taxon>Thermotogaceae</taxon>
        <taxon>Pseudothermotoga</taxon>
    </lineage>
</organism>
<comment type="function">
    <text evidence="1">Exhibits a very high intrinsic GTPase hydrolysis rate. Involved in the addition of a carboxymethylaminomethyl (cmnm) group at the wobble position (U34) of certain tRNAs, forming tRNA-cmnm(5)s(2)U34.</text>
</comment>
<comment type="cofactor">
    <cofactor evidence="1">
        <name>K(+)</name>
        <dbReference type="ChEBI" id="CHEBI:29103"/>
    </cofactor>
    <text evidence="1">Binds 1 potassium ion per subunit.</text>
</comment>
<comment type="subunit">
    <text evidence="1">Homodimer. Heterotetramer of two MnmE and two MnmG subunits.</text>
</comment>
<comment type="subcellular location">
    <subcellularLocation>
        <location evidence="1">Cytoplasm</location>
    </subcellularLocation>
</comment>
<comment type="similarity">
    <text evidence="1">Belongs to the TRAFAC class TrmE-Era-EngA-EngB-Septin-like GTPase superfamily. TrmE GTPase family.</text>
</comment>
<reference key="1">
    <citation type="submission" date="2007-08" db="EMBL/GenBank/DDBJ databases">
        <title>Complete sequence of Thermotoga lettingae TMO.</title>
        <authorList>
            <consortium name="US DOE Joint Genome Institute"/>
            <person name="Copeland A."/>
            <person name="Lucas S."/>
            <person name="Lapidus A."/>
            <person name="Barry K."/>
            <person name="Glavina del Rio T."/>
            <person name="Dalin E."/>
            <person name="Tice H."/>
            <person name="Pitluck S."/>
            <person name="Foster B."/>
            <person name="Bruce D."/>
            <person name="Schmutz J."/>
            <person name="Larimer F."/>
            <person name="Land M."/>
            <person name="Hauser L."/>
            <person name="Kyrpides N."/>
            <person name="Mikhailova N."/>
            <person name="Nelson K."/>
            <person name="Gogarten J.P."/>
            <person name="Noll K."/>
            <person name="Richardson P."/>
        </authorList>
    </citation>
    <scope>NUCLEOTIDE SEQUENCE [LARGE SCALE GENOMIC DNA]</scope>
    <source>
        <strain>ATCC BAA-301 / DSM 14385 / NBRC 107922 / TMO</strain>
    </source>
</reference>